<gene>
    <name evidence="1" type="primary">aroK</name>
    <name type="ordered locus">BCAH187_A4366</name>
</gene>
<keyword id="KW-0028">Amino-acid biosynthesis</keyword>
<keyword id="KW-0057">Aromatic amino acid biosynthesis</keyword>
<keyword id="KW-0067">ATP-binding</keyword>
<keyword id="KW-0963">Cytoplasm</keyword>
<keyword id="KW-0418">Kinase</keyword>
<keyword id="KW-0460">Magnesium</keyword>
<keyword id="KW-0479">Metal-binding</keyword>
<keyword id="KW-0547">Nucleotide-binding</keyword>
<keyword id="KW-0808">Transferase</keyword>
<organism>
    <name type="scientific">Bacillus cereus (strain AH187)</name>
    <dbReference type="NCBI Taxonomy" id="405534"/>
    <lineage>
        <taxon>Bacteria</taxon>
        <taxon>Bacillati</taxon>
        <taxon>Bacillota</taxon>
        <taxon>Bacilli</taxon>
        <taxon>Bacillales</taxon>
        <taxon>Bacillaceae</taxon>
        <taxon>Bacillus</taxon>
        <taxon>Bacillus cereus group</taxon>
    </lineage>
</organism>
<name>AROK_BACC7</name>
<protein>
    <recommendedName>
        <fullName evidence="1">Shikimate kinase</fullName>
        <shortName evidence="1">SK</shortName>
        <ecNumber evidence="1">2.7.1.71</ecNumber>
    </recommendedName>
</protein>
<feature type="chain" id="PRO_1000117454" description="Shikimate kinase">
    <location>
        <begin position="1"/>
        <end position="165"/>
    </location>
</feature>
<feature type="binding site" evidence="1">
    <location>
        <begin position="11"/>
        <end position="16"/>
    </location>
    <ligand>
        <name>ATP</name>
        <dbReference type="ChEBI" id="CHEBI:30616"/>
    </ligand>
</feature>
<feature type="binding site" evidence="1">
    <location>
        <position position="15"/>
    </location>
    <ligand>
        <name>Mg(2+)</name>
        <dbReference type="ChEBI" id="CHEBI:18420"/>
    </ligand>
</feature>
<feature type="binding site" evidence="1">
    <location>
        <position position="33"/>
    </location>
    <ligand>
        <name>substrate</name>
    </ligand>
</feature>
<feature type="binding site" evidence="1">
    <location>
        <position position="57"/>
    </location>
    <ligand>
        <name>substrate</name>
    </ligand>
</feature>
<feature type="binding site" evidence="1">
    <location>
        <position position="78"/>
    </location>
    <ligand>
        <name>substrate</name>
    </ligand>
</feature>
<feature type="binding site" evidence="1">
    <location>
        <position position="116"/>
    </location>
    <ligand>
        <name>ATP</name>
        <dbReference type="ChEBI" id="CHEBI:30616"/>
    </ligand>
</feature>
<feature type="binding site" evidence="1">
    <location>
        <position position="134"/>
    </location>
    <ligand>
        <name>substrate</name>
    </ligand>
</feature>
<comment type="function">
    <text evidence="1">Catalyzes the specific phosphorylation of the 3-hydroxyl group of shikimic acid using ATP as a cosubstrate.</text>
</comment>
<comment type="catalytic activity">
    <reaction evidence="1">
        <text>shikimate + ATP = 3-phosphoshikimate + ADP + H(+)</text>
        <dbReference type="Rhea" id="RHEA:13121"/>
        <dbReference type="ChEBI" id="CHEBI:15378"/>
        <dbReference type="ChEBI" id="CHEBI:30616"/>
        <dbReference type="ChEBI" id="CHEBI:36208"/>
        <dbReference type="ChEBI" id="CHEBI:145989"/>
        <dbReference type="ChEBI" id="CHEBI:456216"/>
        <dbReference type="EC" id="2.7.1.71"/>
    </reaction>
</comment>
<comment type="cofactor">
    <cofactor evidence="1">
        <name>Mg(2+)</name>
        <dbReference type="ChEBI" id="CHEBI:18420"/>
    </cofactor>
    <text evidence="1">Binds 1 Mg(2+) ion per subunit.</text>
</comment>
<comment type="pathway">
    <text evidence="1">Metabolic intermediate biosynthesis; chorismate biosynthesis; chorismate from D-erythrose 4-phosphate and phosphoenolpyruvate: step 5/7.</text>
</comment>
<comment type="subunit">
    <text evidence="1">Monomer.</text>
</comment>
<comment type="subcellular location">
    <subcellularLocation>
        <location evidence="1">Cytoplasm</location>
    </subcellularLocation>
</comment>
<comment type="similarity">
    <text evidence="1">Belongs to the shikimate kinase family.</text>
</comment>
<dbReference type="EC" id="2.7.1.71" evidence="1"/>
<dbReference type="EMBL" id="CP001177">
    <property type="protein sequence ID" value="ACJ79165.1"/>
    <property type="molecule type" value="Genomic_DNA"/>
</dbReference>
<dbReference type="SMR" id="B7HPD4"/>
<dbReference type="KEGG" id="bcr:BCAH187_A4366"/>
<dbReference type="HOGENOM" id="CLU_057607_4_3_9"/>
<dbReference type="UniPathway" id="UPA00053">
    <property type="reaction ID" value="UER00088"/>
</dbReference>
<dbReference type="Proteomes" id="UP000002214">
    <property type="component" value="Chromosome"/>
</dbReference>
<dbReference type="GO" id="GO:0005829">
    <property type="term" value="C:cytosol"/>
    <property type="evidence" value="ECO:0007669"/>
    <property type="project" value="TreeGrafter"/>
</dbReference>
<dbReference type="GO" id="GO:0005524">
    <property type="term" value="F:ATP binding"/>
    <property type="evidence" value="ECO:0007669"/>
    <property type="project" value="UniProtKB-UniRule"/>
</dbReference>
<dbReference type="GO" id="GO:0000287">
    <property type="term" value="F:magnesium ion binding"/>
    <property type="evidence" value="ECO:0007669"/>
    <property type="project" value="UniProtKB-UniRule"/>
</dbReference>
<dbReference type="GO" id="GO:0004765">
    <property type="term" value="F:shikimate kinase activity"/>
    <property type="evidence" value="ECO:0007669"/>
    <property type="project" value="UniProtKB-UniRule"/>
</dbReference>
<dbReference type="GO" id="GO:0008652">
    <property type="term" value="P:amino acid biosynthetic process"/>
    <property type="evidence" value="ECO:0007669"/>
    <property type="project" value="UniProtKB-KW"/>
</dbReference>
<dbReference type="GO" id="GO:0009073">
    <property type="term" value="P:aromatic amino acid family biosynthetic process"/>
    <property type="evidence" value="ECO:0007669"/>
    <property type="project" value="UniProtKB-KW"/>
</dbReference>
<dbReference type="GO" id="GO:0009423">
    <property type="term" value="P:chorismate biosynthetic process"/>
    <property type="evidence" value="ECO:0007669"/>
    <property type="project" value="UniProtKB-UniRule"/>
</dbReference>
<dbReference type="CDD" id="cd00464">
    <property type="entry name" value="SK"/>
    <property type="match status" value="1"/>
</dbReference>
<dbReference type="Gene3D" id="3.40.50.300">
    <property type="entry name" value="P-loop containing nucleotide triphosphate hydrolases"/>
    <property type="match status" value="1"/>
</dbReference>
<dbReference type="HAMAP" id="MF_00109">
    <property type="entry name" value="Shikimate_kinase"/>
    <property type="match status" value="1"/>
</dbReference>
<dbReference type="InterPro" id="IPR027417">
    <property type="entry name" value="P-loop_NTPase"/>
</dbReference>
<dbReference type="InterPro" id="IPR031322">
    <property type="entry name" value="Shikimate/glucono_kinase"/>
</dbReference>
<dbReference type="InterPro" id="IPR000623">
    <property type="entry name" value="Shikimate_kinase/TSH1"/>
</dbReference>
<dbReference type="PANTHER" id="PTHR21087">
    <property type="entry name" value="SHIKIMATE KINASE"/>
    <property type="match status" value="1"/>
</dbReference>
<dbReference type="PANTHER" id="PTHR21087:SF16">
    <property type="entry name" value="SHIKIMATE KINASE 1, CHLOROPLASTIC"/>
    <property type="match status" value="1"/>
</dbReference>
<dbReference type="Pfam" id="PF01202">
    <property type="entry name" value="SKI"/>
    <property type="match status" value="1"/>
</dbReference>
<dbReference type="PRINTS" id="PR01100">
    <property type="entry name" value="SHIKIMTKNASE"/>
</dbReference>
<dbReference type="SUPFAM" id="SSF52540">
    <property type="entry name" value="P-loop containing nucleoside triphosphate hydrolases"/>
    <property type="match status" value="1"/>
</dbReference>
<evidence type="ECO:0000255" key="1">
    <source>
        <dbReference type="HAMAP-Rule" id="MF_00109"/>
    </source>
</evidence>
<sequence length="165" mass="19385">MKSIYITGYMGAGKTTIGKALSKELHMDVIDTDQKIEEKQEKEIRDIFAEEGEMAFREYESEMLRSLPVENVIITTGGGIIEREENRKWMKENGTVVYLYCDPHVIAERLREDTTRPLFQKKDIDAFVMKFELRRAYYEEAHIHIDTTNKSVKQIMDELKEKINE</sequence>
<accession>B7HPD4</accession>
<proteinExistence type="inferred from homology"/>
<reference key="1">
    <citation type="submission" date="2008-10" db="EMBL/GenBank/DDBJ databases">
        <title>Genome sequence of Bacillus cereus AH187.</title>
        <authorList>
            <person name="Dodson R.J."/>
            <person name="Durkin A.S."/>
            <person name="Rosovitz M.J."/>
            <person name="Rasko D.A."/>
            <person name="Kolsto A.B."/>
            <person name="Okstad O.A."/>
            <person name="Ravel J."/>
            <person name="Sutton G."/>
        </authorList>
    </citation>
    <scope>NUCLEOTIDE SEQUENCE [LARGE SCALE GENOMIC DNA]</scope>
    <source>
        <strain>AH187</strain>
    </source>
</reference>